<feature type="chain" id="PRO_1000147301" description="Nucleotide-binding protein Dhaf_3127">
    <location>
        <begin position="1"/>
        <end position="163"/>
    </location>
</feature>
<evidence type="ECO:0000255" key="1">
    <source>
        <dbReference type="HAMAP-Rule" id="MF_00632"/>
    </source>
</evidence>
<protein>
    <recommendedName>
        <fullName evidence="1">Nucleotide-binding protein Dhaf_3127</fullName>
    </recommendedName>
</protein>
<organism>
    <name type="scientific">Desulfitobacterium hafniense (strain DSM 10664 / DCB-2)</name>
    <dbReference type="NCBI Taxonomy" id="272564"/>
    <lineage>
        <taxon>Bacteria</taxon>
        <taxon>Bacillati</taxon>
        <taxon>Bacillota</taxon>
        <taxon>Clostridia</taxon>
        <taxon>Eubacteriales</taxon>
        <taxon>Desulfitobacteriaceae</taxon>
        <taxon>Desulfitobacterium</taxon>
    </lineage>
</organism>
<name>Y3127_DESHD</name>
<accession>B8G089</accession>
<keyword id="KW-0547">Nucleotide-binding</keyword>
<dbReference type="EMBL" id="CP001336">
    <property type="protein sequence ID" value="ACL21150.1"/>
    <property type="molecule type" value="Genomic_DNA"/>
</dbReference>
<dbReference type="RefSeq" id="WP_015944407.1">
    <property type="nucleotide sequence ID" value="NC_011830.1"/>
</dbReference>
<dbReference type="SMR" id="B8G089"/>
<dbReference type="KEGG" id="dhd:Dhaf_3127"/>
<dbReference type="HOGENOM" id="CLU_099839_1_0_9"/>
<dbReference type="Proteomes" id="UP000007726">
    <property type="component" value="Chromosome"/>
</dbReference>
<dbReference type="GO" id="GO:0005829">
    <property type="term" value="C:cytosol"/>
    <property type="evidence" value="ECO:0007669"/>
    <property type="project" value="TreeGrafter"/>
</dbReference>
<dbReference type="GO" id="GO:0000166">
    <property type="term" value="F:nucleotide binding"/>
    <property type="evidence" value="ECO:0007669"/>
    <property type="project" value="TreeGrafter"/>
</dbReference>
<dbReference type="CDD" id="cd11740">
    <property type="entry name" value="YajQ_like"/>
    <property type="match status" value="1"/>
</dbReference>
<dbReference type="Gene3D" id="3.30.70.860">
    <property type="match status" value="1"/>
</dbReference>
<dbReference type="Gene3D" id="3.30.70.990">
    <property type="entry name" value="YajQ-like, domain 2"/>
    <property type="match status" value="1"/>
</dbReference>
<dbReference type="HAMAP" id="MF_00632">
    <property type="entry name" value="YajQ"/>
    <property type="match status" value="1"/>
</dbReference>
<dbReference type="InterPro" id="IPR007551">
    <property type="entry name" value="DUF520"/>
</dbReference>
<dbReference type="InterPro" id="IPR035571">
    <property type="entry name" value="UPF0234-like_C"/>
</dbReference>
<dbReference type="InterPro" id="IPR035570">
    <property type="entry name" value="UPF0234_N"/>
</dbReference>
<dbReference type="InterPro" id="IPR036183">
    <property type="entry name" value="YajQ-like_sf"/>
</dbReference>
<dbReference type="NCBIfam" id="NF003819">
    <property type="entry name" value="PRK05412.1"/>
    <property type="match status" value="1"/>
</dbReference>
<dbReference type="PANTHER" id="PTHR30476">
    <property type="entry name" value="UPF0234 PROTEIN YAJQ"/>
    <property type="match status" value="1"/>
</dbReference>
<dbReference type="PANTHER" id="PTHR30476:SF0">
    <property type="entry name" value="UPF0234 PROTEIN YAJQ"/>
    <property type="match status" value="1"/>
</dbReference>
<dbReference type="Pfam" id="PF04461">
    <property type="entry name" value="DUF520"/>
    <property type="match status" value="1"/>
</dbReference>
<dbReference type="SUPFAM" id="SSF89963">
    <property type="entry name" value="YajQ-like"/>
    <property type="match status" value="2"/>
</dbReference>
<proteinExistence type="inferred from homology"/>
<comment type="function">
    <text evidence="1">Nucleotide-binding protein.</text>
</comment>
<comment type="similarity">
    <text evidence="1">Belongs to the YajQ family.</text>
</comment>
<gene>
    <name type="ordered locus">Dhaf_3127</name>
</gene>
<reference key="1">
    <citation type="journal article" date="2012" name="BMC Microbiol.">
        <title>Genome sequence of Desulfitobacterium hafniense DCB-2, a Gram-positive anaerobe capable of dehalogenation and metal reduction.</title>
        <authorList>
            <person name="Kim S.H."/>
            <person name="Harzman C."/>
            <person name="Davis J.K."/>
            <person name="Hutcheson R."/>
            <person name="Broderick J.B."/>
            <person name="Marsh T.L."/>
            <person name="Tiedje J.M."/>
        </authorList>
    </citation>
    <scope>NUCLEOTIDE SEQUENCE [LARGE SCALE GENOMIC DNA]</scope>
    <source>
        <strain>DSM 10664 / DCB-2</strain>
    </source>
</reference>
<sequence>MAKDSSFDIVSKVEMQEVINAVHQAQKEIEQRFDFKNSKSSLELQDEKIILVSDDDFKLRNVIDILESKLVKRQVSLKALEYGKVQPAAGDTVRQEVKLVQGISQDKGKEINKLIKDSKIKVSSSIQGDQVRVTGKNKDDLQEVIALLRKQDLGIDLQFINYR</sequence>